<evidence type="ECO:0000255" key="1">
    <source>
        <dbReference type="HAMAP-Rule" id="MF_01416"/>
    </source>
</evidence>
<comment type="function">
    <text evidence="1">F(1)F(0) ATP synthase produces ATP from ADP in the presence of a proton or sodium gradient. F-type ATPases consist of two structural domains, F(1) containing the extramembraneous catalytic core and F(0) containing the membrane proton channel, linked together by a central stalk and a peripheral stalk. During catalysis, ATP synthesis in the catalytic domain of F(1) is coupled via a rotary mechanism of the central stalk subunits to proton translocation.</text>
</comment>
<comment type="function">
    <text evidence="1">This protein is part of the stalk that links CF(0) to CF(1). It either transmits conformational changes from CF(0) to CF(1) or is implicated in proton conduction.</text>
</comment>
<comment type="subunit">
    <text evidence="1">F-type ATPases have 2 components, F(1) - the catalytic core - and F(0) - the membrane proton channel. F(1) has five subunits: alpha(3), beta(3), gamma(1), delta(1), epsilon(1). F(0) has three main subunits: a(1), b(2) and c(10-14). The alpha and beta chains form an alternating ring which encloses part of the gamma chain. F(1) is attached to F(0) by a central stalk formed by the gamma and epsilon chains, while a peripheral stalk is formed by the delta and b chains.</text>
</comment>
<comment type="subcellular location">
    <subcellularLocation>
        <location evidence="1">Cell inner membrane</location>
        <topology evidence="1">Peripheral membrane protein</topology>
    </subcellularLocation>
</comment>
<comment type="similarity">
    <text evidence="1">Belongs to the ATPase delta chain family.</text>
</comment>
<protein>
    <recommendedName>
        <fullName evidence="1">ATP synthase subunit delta</fullName>
    </recommendedName>
    <alternativeName>
        <fullName evidence="1">ATP synthase F(1) sector subunit delta</fullName>
    </alternativeName>
    <alternativeName>
        <fullName evidence="1">F-type ATPase subunit delta</fullName>
        <shortName evidence="1">F-ATPase subunit delta</shortName>
    </alternativeName>
</protein>
<keyword id="KW-0066">ATP synthesis</keyword>
<keyword id="KW-0997">Cell inner membrane</keyword>
<keyword id="KW-1003">Cell membrane</keyword>
<keyword id="KW-0139">CF(1)</keyword>
<keyword id="KW-0375">Hydrogen ion transport</keyword>
<keyword id="KW-0406">Ion transport</keyword>
<keyword id="KW-0472">Membrane</keyword>
<keyword id="KW-1185">Reference proteome</keyword>
<keyword id="KW-0813">Transport</keyword>
<accession>Q6CYJ2</accession>
<sequence>MSEFVTVARPYAKAAFDFAVENQALDRWQSMLAFSAEVARNEQIAELLSGAIAPIELAKTFIAVCGDQLDEAGQNLIRVMAENGRLLVLPEVLEQFIQLRAALESTVDVDVISASTLNEQQLSKIAAAMEKRLSRKVKLNCKIDKSVMAGVVIRAGDMVIDGSIRSRLERLADVLQS</sequence>
<feature type="chain" id="PRO_1000184708" description="ATP synthase subunit delta">
    <location>
        <begin position="1"/>
        <end position="177"/>
    </location>
</feature>
<organism>
    <name type="scientific">Pectobacterium atrosepticum (strain SCRI 1043 / ATCC BAA-672)</name>
    <name type="common">Erwinia carotovora subsp. atroseptica</name>
    <dbReference type="NCBI Taxonomy" id="218491"/>
    <lineage>
        <taxon>Bacteria</taxon>
        <taxon>Pseudomonadati</taxon>
        <taxon>Pseudomonadota</taxon>
        <taxon>Gammaproteobacteria</taxon>
        <taxon>Enterobacterales</taxon>
        <taxon>Pectobacteriaceae</taxon>
        <taxon>Pectobacterium</taxon>
    </lineage>
</organism>
<reference key="1">
    <citation type="journal article" date="2004" name="Proc. Natl. Acad. Sci. U.S.A.">
        <title>Genome sequence of the enterobacterial phytopathogen Erwinia carotovora subsp. atroseptica and characterization of virulence factors.</title>
        <authorList>
            <person name="Bell K.S."/>
            <person name="Sebaihia M."/>
            <person name="Pritchard L."/>
            <person name="Holden M.T.G."/>
            <person name="Hyman L.J."/>
            <person name="Holeva M.C."/>
            <person name="Thomson N.R."/>
            <person name="Bentley S.D."/>
            <person name="Churcher L.J.C."/>
            <person name="Mungall K."/>
            <person name="Atkin R."/>
            <person name="Bason N."/>
            <person name="Brooks K."/>
            <person name="Chillingworth T."/>
            <person name="Clark K."/>
            <person name="Doggett J."/>
            <person name="Fraser A."/>
            <person name="Hance Z."/>
            <person name="Hauser H."/>
            <person name="Jagels K."/>
            <person name="Moule S."/>
            <person name="Norbertczak H."/>
            <person name="Ormond D."/>
            <person name="Price C."/>
            <person name="Quail M.A."/>
            <person name="Sanders M."/>
            <person name="Walker D."/>
            <person name="Whitehead S."/>
            <person name="Salmond G.P.C."/>
            <person name="Birch P.R.J."/>
            <person name="Parkhill J."/>
            <person name="Toth I.K."/>
        </authorList>
    </citation>
    <scope>NUCLEOTIDE SEQUENCE [LARGE SCALE GENOMIC DNA]</scope>
    <source>
        <strain>SCRI 1043 / ATCC BAA-672</strain>
    </source>
</reference>
<name>ATPD_PECAS</name>
<gene>
    <name evidence="1" type="primary">atpH</name>
    <name type="ordered locus">ECA4515</name>
</gene>
<proteinExistence type="inferred from homology"/>
<dbReference type="EMBL" id="BX950851">
    <property type="protein sequence ID" value="CAG77410.1"/>
    <property type="molecule type" value="Genomic_DNA"/>
</dbReference>
<dbReference type="RefSeq" id="WP_011095969.1">
    <property type="nucleotide sequence ID" value="NC_004547.2"/>
</dbReference>
<dbReference type="SMR" id="Q6CYJ2"/>
<dbReference type="STRING" id="218491.ECA4515"/>
<dbReference type="GeneID" id="57211201"/>
<dbReference type="KEGG" id="eca:ECA4515"/>
<dbReference type="PATRIC" id="fig|218491.5.peg.4602"/>
<dbReference type="eggNOG" id="COG0712">
    <property type="taxonomic scope" value="Bacteria"/>
</dbReference>
<dbReference type="HOGENOM" id="CLU_085114_3_0_6"/>
<dbReference type="OrthoDB" id="9816221at2"/>
<dbReference type="Proteomes" id="UP000007966">
    <property type="component" value="Chromosome"/>
</dbReference>
<dbReference type="GO" id="GO:0005886">
    <property type="term" value="C:plasma membrane"/>
    <property type="evidence" value="ECO:0007669"/>
    <property type="project" value="UniProtKB-SubCell"/>
</dbReference>
<dbReference type="GO" id="GO:0045259">
    <property type="term" value="C:proton-transporting ATP synthase complex"/>
    <property type="evidence" value="ECO:0007669"/>
    <property type="project" value="UniProtKB-KW"/>
</dbReference>
<dbReference type="GO" id="GO:0046933">
    <property type="term" value="F:proton-transporting ATP synthase activity, rotational mechanism"/>
    <property type="evidence" value="ECO:0007669"/>
    <property type="project" value="UniProtKB-UniRule"/>
</dbReference>
<dbReference type="FunFam" id="1.10.520.20:FF:000001">
    <property type="entry name" value="ATP synthase subunit delta"/>
    <property type="match status" value="1"/>
</dbReference>
<dbReference type="Gene3D" id="1.10.520.20">
    <property type="entry name" value="N-terminal domain of the delta subunit of the F1F0-ATP synthase"/>
    <property type="match status" value="1"/>
</dbReference>
<dbReference type="HAMAP" id="MF_01416">
    <property type="entry name" value="ATP_synth_delta_bact"/>
    <property type="match status" value="1"/>
</dbReference>
<dbReference type="InterPro" id="IPR026015">
    <property type="entry name" value="ATP_synth_OSCP/delta_N_sf"/>
</dbReference>
<dbReference type="InterPro" id="IPR020781">
    <property type="entry name" value="ATPase_OSCP/d_CS"/>
</dbReference>
<dbReference type="InterPro" id="IPR000711">
    <property type="entry name" value="ATPase_OSCP/dsu"/>
</dbReference>
<dbReference type="NCBIfam" id="TIGR01145">
    <property type="entry name" value="ATP_synt_delta"/>
    <property type="match status" value="1"/>
</dbReference>
<dbReference type="NCBIfam" id="NF004402">
    <property type="entry name" value="PRK05758.2-2"/>
    <property type="match status" value="1"/>
</dbReference>
<dbReference type="NCBIfam" id="NF004404">
    <property type="entry name" value="PRK05758.2-5"/>
    <property type="match status" value="1"/>
</dbReference>
<dbReference type="PANTHER" id="PTHR11910">
    <property type="entry name" value="ATP SYNTHASE DELTA CHAIN"/>
    <property type="match status" value="1"/>
</dbReference>
<dbReference type="Pfam" id="PF00213">
    <property type="entry name" value="OSCP"/>
    <property type="match status" value="1"/>
</dbReference>
<dbReference type="PRINTS" id="PR00125">
    <property type="entry name" value="ATPASEDELTA"/>
</dbReference>
<dbReference type="SUPFAM" id="SSF47928">
    <property type="entry name" value="N-terminal domain of the delta subunit of the F1F0-ATP synthase"/>
    <property type="match status" value="1"/>
</dbReference>
<dbReference type="PROSITE" id="PS00389">
    <property type="entry name" value="ATPASE_DELTA"/>
    <property type="match status" value="1"/>
</dbReference>